<feature type="chain" id="PRO_0000296270" description="Integrator complex subunit 14">
    <location>
        <begin position="1"/>
        <end position="518"/>
    </location>
</feature>
<feature type="domain" description="VWFA">
    <location>
        <begin position="2"/>
        <end position="204"/>
    </location>
</feature>
<feature type="region of interest" description="Disordered" evidence="3">
    <location>
        <begin position="373"/>
        <end position="394"/>
    </location>
</feature>
<feature type="compositionally biased region" description="Basic and acidic residues" evidence="3">
    <location>
        <begin position="374"/>
        <end position="386"/>
    </location>
</feature>
<feature type="binding site" evidence="1">
    <location>
        <position position="10"/>
    </location>
    <ligand>
        <name>Mg(2+)</name>
        <dbReference type="ChEBI" id="CHEBI:18420"/>
    </ligand>
</feature>
<feature type="binding site" evidence="1">
    <location>
        <position position="12"/>
    </location>
    <ligand>
        <name>Mg(2+)</name>
        <dbReference type="ChEBI" id="CHEBI:18420"/>
    </ligand>
</feature>
<feature type="binding site" evidence="1">
    <location>
        <position position="86"/>
    </location>
    <ligand>
        <name>Mg(2+)</name>
        <dbReference type="ChEBI" id="CHEBI:18420"/>
    </ligand>
</feature>
<protein>
    <recommendedName>
        <fullName evidence="1">Integrator complex subunit 14</fullName>
    </recommendedName>
    <alternativeName>
        <fullName evidence="4">von Willebrand factor A domain-containing protein 9</fullName>
    </alternativeName>
</protein>
<accession>Q5ZK21</accession>
<dbReference type="EMBL" id="AJ720263">
    <property type="protein sequence ID" value="CAG31922.1"/>
    <property type="molecule type" value="mRNA"/>
</dbReference>
<dbReference type="RefSeq" id="NP_001005825.1">
    <property type="nucleotide sequence ID" value="NM_001005825.1"/>
</dbReference>
<dbReference type="RefSeq" id="XP_015147579.1">
    <property type="nucleotide sequence ID" value="XM_015292093.1"/>
</dbReference>
<dbReference type="RefSeq" id="XP_015147580.1">
    <property type="nucleotide sequence ID" value="XM_015292094.1"/>
</dbReference>
<dbReference type="SMR" id="Q5ZK21"/>
<dbReference type="FunCoup" id="Q5ZK21">
    <property type="interactions" value="3201"/>
</dbReference>
<dbReference type="STRING" id="9031.ENSGALP00000070915"/>
<dbReference type="PaxDb" id="9031-ENSGALP00000041054"/>
<dbReference type="Ensembl" id="ENSGALT00010043060.1">
    <property type="protein sequence ID" value="ENSGALP00010025550.1"/>
    <property type="gene ID" value="ENSGALG00010017815.1"/>
</dbReference>
<dbReference type="GeneID" id="415540"/>
<dbReference type="KEGG" id="gga:415540"/>
<dbReference type="CTD" id="415540"/>
<dbReference type="VEuPathDB" id="HostDB:geneid_415540"/>
<dbReference type="eggNOG" id="ENOG502QQ37">
    <property type="taxonomic scope" value="Eukaryota"/>
</dbReference>
<dbReference type="GeneTree" id="ENSGT00390000009486"/>
<dbReference type="HOGENOM" id="CLU_041485_0_0_1"/>
<dbReference type="InParanoid" id="Q5ZK21"/>
<dbReference type="OMA" id="QSSVVWI"/>
<dbReference type="OrthoDB" id="2374335at2759"/>
<dbReference type="PhylomeDB" id="Q5ZK21"/>
<dbReference type="TreeFam" id="TF323245"/>
<dbReference type="Reactome" id="R-GGA-6807505">
    <property type="pathway name" value="RNA polymerase II transcribes snRNA genes"/>
</dbReference>
<dbReference type="PRO" id="PR:Q5ZK21"/>
<dbReference type="Proteomes" id="UP000000539">
    <property type="component" value="Chromosome 10"/>
</dbReference>
<dbReference type="Bgee" id="ENSGALG00000007491">
    <property type="expression patterns" value="Expressed in spermatocyte and 13 other cell types or tissues"/>
</dbReference>
<dbReference type="GO" id="GO:0160232">
    <property type="term" value="C:INTAC complex"/>
    <property type="evidence" value="ECO:0000250"/>
    <property type="project" value="UniProtKB"/>
</dbReference>
<dbReference type="GO" id="GO:0032039">
    <property type="term" value="C:integrator complex"/>
    <property type="evidence" value="ECO:0007669"/>
    <property type="project" value="Ensembl"/>
</dbReference>
<dbReference type="GO" id="GO:0160240">
    <property type="term" value="P:RNA polymerase II transcription initiation surveillance"/>
    <property type="evidence" value="ECO:0000250"/>
    <property type="project" value="UniProtKB"/>
</dbReference>
<dbReference type="GO" id="GO:0034472">
    <property type="term" value="P:snRNA 3'-end processing"/>
    <property type="evidence" value="ECO:0000318"/>
    <property type="project" value="GO_Central"/>
</dbReference>
<dbReference type="FunFam" id="3.40.50.410:FF:000137">
    <property type="entry name" value="Integrator complex subunit 14"/>
    <property type="match status" value="1"/>
</dbReference>
<dbReference type="Gene3D" id="3.40.50.410">
    <property type="entry name" value="von Willebrand factor, type A domain"/>
    <property type="match status" value="1"/>
</dbReference>
<dbReference type="InterPro" id="IPR039841">
    <property type="entry name" value="INTS14"/>
</dbReference>
<dbReference type="InterPro" id="IPR045814">
    <property type="entry name" value="IntS14_b-barrel"/>
</dbReference>
<dbReference type="InterPro" id="IPR046471">
    <property type="entry name" value="IntS14_C"/>
</dbReference>
<dbReference type="InterPro" id="IPR002035">
    <property type="entry name" value="VWF_A"/>
</dbReference>
<dbReference type="InterPro" id="IPR036465">
    <property type="entry name" value="vWFA_dom_sf"/>
</dbReference>
<dbReference type="PANTHER" id="PTHR13532">
    <property type="match status" value="1"/>
</dbReference>
<dbReference type="PANTHER" id="PTHR13532:SF3">
    <property type="entry name" value="INTEGRATOR COMPLEX SUBUNIT 14"/>
    <property type="match status" value="1"/>
</dbReference>
<dbReference type="Pfam" id="PF19435">
    <property type="entry name" value="IntS14_b-barrel"/>
    <property type="match status" value="1"/>
</dbReference>
<dbReference type="Pfam" id="PF20504">
    <property type="entry name" value="IntS14_C"/>
    <property type="match status" value="1"/>
</dbReference>
<dbReference type="Pfam" id="PF13519">
    <property type="entry name" value="VWA_2"/>
    <property type="match status" value="1"/>
</dbReference>
<dbReference type="SUPFAM" id="SSF53300">
    <property type="entry name" value="vWA-like"/>
    <property type="match status" value="1"/>
</dbReference>
<name>INT14_CHICK</name>
<reference key="1">
    <citation type="journal article" date="2005" name="Genome Biol.">
        <title>Full-length cDNAs from chicken bursal lymphocytes to facilitate gene function analysis.</title>
        <authorList>
            <person name="Caldwell R.B."/>
            <person name="Kierzek A.M."/>
            <person name="Arakawa H."/>
            <person name="Bezzubov Y."/>
            <person name="Zaim J."/>
            <person name="Fiedler P."/>
            <person name="Kutter S."/>
            <person name="Blagodatski A."/>
            <person name="Kostovska D."/>
            <person name="Koter M."/>
            <person name="Plachy J."/>
            <person name="Carninci P."/>
            <person name="Hayashizaki Y."/>
            <person name="Buerstedde J.-M."/>
        </authorList>
    </citation>
    <scope>NUCLEOTIDE SEQUENCE [LARGE SCALE MRNA]</scope>
    <source>
        <strain>CB</strain>
        <tissue>Bursa of Fabricius</tissue>
    </source>
</reference>
<organism>
    <name type="scientific">Gallus gallus</name>
    <name type="common">Chicken</name>
    <dbReference type="NCBI Taxonomy" id="9031"/>
    <lineage>
        <taxon>Eukaryota</taxon>
        <taxon>Metazoa</taxon>
        <taxon>Chordata</taxon>
        <taxon>Craniata</taxon>
        <taxon>Vertebrata</taxon>
        <taxon>Euteleostomi</taxon>
        <taxon>Archelosauria</taxon>
        <taxon>Archosauria</taxon>
        <taxon>Dinosauria</taxon>
        <taxon>Saurischia</taxon>
        <taxon>Theropoda</taxon>
        <taxon>Coelurosauria</taxon>
        <taxon>Aves</taxon>
        <taxon>Neognathae</taxon>
        <taxon>Galloanserae</taxon>
        <taxon>Galliformes</taxon>
        <taxon>Phasianidae</taxon>
        <taxon>Phasianinae</taxon>
        <taxon>Gallus</taxon>
    </lineage>
</organism>
<keyword id="KW-0460">Magnesium</keyword>
<keyword id="KW-0479">Metal-binding</keyword>
<keyword id="KW-0539">Nucleus</keyword>
<keyword id="KW-1185">Reference proteome</keyword>
<comment type="function">
    <text evidence="1">Component of the integrator complex, a multiprotein complex that terminates RNA polymerase II (Pol II) transcription in the promoter-proximal region of genes. The integrator complex provides a quality checkpoint during transcription elongation by driving premature transcription termination of transcripts that are unfavorably configured for transcriptional elongation: the complex terminates transcription by (1) catalyzing dephosphorylation of the C-terminal domain (CTD) of Pol II subunit POLR2A/RPB1 and SUPT5H/SPT5, (2) degrading the exiting nascent RNA transcript via endonuclease activity and (3) promoting the release of Pol II from bound DNA. The integrator complex is also involved in terminating the synthesis of non-coding Pol II transcripts, such as enhancer RNAs (eRNAs), small nuclear RNAs (snRNAs), telomerase RNAs and long non-coding RNAs (lncRNAs). Within the integrator complex, INTS14 is part of the integrator tail module that acts as a platform for the recruitment of transcription factors at promoters.</text>
</comment>
<comment type="subunit">
    <text evidence="1">Component of the Integrator complex, composed of core subunits INTS1, INTS2, INTS3, INTS4, INTS5, INTS6, INTS7, INTS8, INTS9/RC74, INTS10, INTS11/CPSF3L, INTS12, INTS13, INTS14 and INTS15. The core complex associates with protein phosphatase 2A subunits PPP2CA and PPP2R1A, to form the Integrator-PP2A (INTAC) complex. INTS14 is part of the tail subcomplex, composed of INTS10, INTS13, INTS14 and INTS15.</text>
</comment>
<comment type="subcellular location">
    <subcellularLocation>
        <location evidence="2">Nucleus</location>
    </subcellularLocation>
</comment>
<comment type="similarity">
    <text evidence="4">Belongs to the Integrator subunit 14 family.</text>
</comment>
<evidence type="ECO:0000250" key="1">
    <source>
        <dbReference type="UniProtKB" id="Q96SY0"/>
    </source>
</evidence>
<evidence type="ECO:0000250" key="2">
    <source>
        <dbReference type="UniProtKB" id="Q9VPY0"/>
    </source>
</evidence>
<evidence type="ECO:0000256" key="3">
    <source>
        <dbReference type="SAM" id="MobiDB-lite"/>
    </source>
</evidence>
<evidence type="ECO:0000305" key="4"/>
<proteinExistence type="evidence at transcript level"/>
<sequence length="518" mass="57533">MPTVVVMDVSLSMTRPVSVEGSEEYQRKHLAVHGLTMLFEHMATNYKLEFTALVVFSSLWELMVPFTRDYNTLQEALSNMDDYDKTCLESALLGVCNIVQQEWGAAIPCQVVLVTDGCLGIGRGSLRHSLATHNQRSESNRFPLPFPFPSKLYVMCMANLEELQSTDSLDCLERLIDLNNGEGQIFTIDGPLCLKNVQSMFGKLIDLAYTPFHAVLKCGHLTSDVQVFPRPEPFIIDEEIDPIPKAINTDLEIVGFVDIADISSPPVLSRHLVLPIALNREGDEVGPGITDDTEDENSANQIAGKIPNFCVLLHGSLKVEGMVAVVQLGPEWYGMLYSQADSKKKSNLMMSLFEPGPEPLPWLGKMAQLGPISDAKENPYGDDDNKSPFPLQPKNKRSYAQNVTVWIKPSGLQTDVQKILRNARKLPEKTQTFYKELNRLRKAALAFGFLDLLKGVADMLERECTLLPDTAHPDAAFQLTHAAQQLKVASTGASEYTAYDHNIAPLQTDFPTTSTERM</sequence>
<gene>
    <name evidence="1" type="primary">INTS14</name>
    <name evidence="4" type="synonym">VWA9</name>
    <name type="ORF">RCJMB04_13l3</name>
</gene>